<feature type="chain" id="PRO_1000094229" description="Mannonate dehydratase">
    <location>
        <begin position="1"/>
        <end position="397"/>
    </location>
</feature>
<organism>
    <name type="scientific">Yersinia pseudotuberculosis serotype IB (strain PB1/+)</name>
    <dbReference type="NCBI Taxonomy" id="502801"/>
    <lineage>
        <taxon>Bacteria</taxon>
        <taxon>Pseudomonadati</taxon>
        <taxon>Pseudomonadota</taxon>
        <taxon>Gammaproteobacteria</taxon>
        <taxon>Enterobacterales</taxon>
        <taxon>Yersiniaceae</taxon>
        <taxon>Yersinia</taxon>
    </lineage>
</organism>
<comment type="function">
    <text evidence="1">Catalyzes the dehydration of D-mannonate.</text>
</comment>
<comment type="catalytic activity">
    <reaction evidence="1">
        <text>D-mannonate = 2-dehydro-3-deoxy-D-gluconate + H2O</text>
        <dbReference type="Rhea" id="RHEA:20097"/>
        <dbReference type="ChEBI" id="CHEBI:15377"/>
        <dbReference type="ChEBI" id="CHEBI:17767"/>
        <dbReference type="ChEBI" id="CHEBI:57990"/>
        <dbReference type="EC" id="4.2.1.8"/>
    </reaction>
</comment>
<comment type="cofactor">
    <cofactor evidence="1">
        <name>Fe(2+)</name>
        <dbReference type="ChEBI" id="CHEBI:29033"/>
    </cofactor>
    <cofactor evidence="1">
        <name>Mn(2+)</name>
        <dbReference type="ChEBI" id="CHEBI:29035"/>
    </cofactor>
</comment>
<comment type="pathway">
    <text evidence="1">Carbohydrate metabolism; pentose and glucuronate interconversion.</text>
</comment>
<comment type="similarity">
    <text evidence="1">Belongs to the mannonate dehydratase family.</text>
</comment>
<accession>B2K9G8</accession>
<protein>
    <recommendedName>
        <fullName evidence="1">Mannonate dehydratase</fullName>
        <ecNumber evidence="1">4.2.1.8</ecNumber>
    </recommendedName>
    <alternativeName>
        <fullName evidence="1">D-mannonate hydro-lyase</fullName>
    </alternativeName>
</protein>
<proteinExistence type="inferred from homology"/>
<evidence type="ECO:0000255" key="1">
    <source>
        <dbReference type="HAMAP-Rule" id="MF_00106"/>
    </source>
</evidence>
<dbReference type="EC" id="4.2.1.8" evidence="1"/>
<dbReference type="EMBL" id="CP001048">
    <property type="protein sequence ID" value="ACC88381.1"/>
    <property type="molecule type" value="Genomic_DNA"/>
</dbReference>
<dbReference type="RefSeq" id="WP_011192020.1">
    <property type="nucleotide sequence ID" value="NZ_CP009780.1"/>
</dbReference>
<dbReference type="SMR" id="B2K9G8"/>
<dbReference type="GeneID" id="49786604"/>
<dbReference type="KEGG" id="ypb:YPTS_1407"/>
<dbReference type="PATRIC" id="fig|502801.10.peg.764"/>
<dbReference type="UniPathway" id="UPA00246"/>
<dbReference type="GO" id="GO:0008198">
    <property type="term" value="F:ferrous iron binding"/>
    <property type="evidence" value="ECO:0007669"/>
    <property type="project" value="TreeGrafter"/>
</dbReference>
<dbReference type="GO" id="GO:0030145">
    <property type="term" value="F:manganese ion binding"/>
    <property type="evidence" value="ECO:0007669"/>
    <property type="project" value="TreeGrafter"/>
</dbReference>
<dbReference type="GO" id="GO:0008927">
    <property type="term" value="F:mannonate dehydratase activity"/>
    <property type="evidence" value="ECO:0007669"/>
    <property type="project" value="UniProtKB-UniRule"/>
</dbReference>
<dbReference type="GO" id="GO:0042840">
    <property type="term" value="P:D-glucuronate catabolic process"/>
    <property type="evidence" value="ECO:0007669"/>
    <property type="project" value="TreeGrafter"/>
</dbReference>
<dbReference type="FunFam" id="3.20.20.150:FF:000010">
    <property type="entry name" value="Mannonate dehydratase"/>
    <property type="match status" value="1"/>
</dbReference>
<dbReference type="Gene3D" id="3.20.20.150">
    <property type="entry name" value="Divalent-metal-dependent TIM barrel enzymes"/>
    <property type="match status" value="1"/>
</dbReference>
<dbReference type="HAMAP" id="MF_00106">
    <property type="entry name" value="UxuA"/>
    <property type="match status" value="1"/>
</dbReference>
<dbReference type="InterPro" id="IPR004628">
    <property type="entry name" value="Man_deHydtase"/>
</dbReference>
<dbReference type="InterPro" id="IPR036237">
    <property type="entry name" value="Xyl_isomerase-like_sf"/>
</dbReference>
<dbReference type="NCBIfam" id="NF003027">
    <property type="entry name" value="PRK03906.1"/>
    <property type="match status" value="1"/>
</dbReference>
<dbReference type="NCBIfam" id="TIGR00695">
    <property type="entry name" value="uxuA"/>
    <property type="match status" value="1"/>
</dbReference>
<dbReference type="PANTHER" id="PTHR30387">
    <property type="entry name" value="MANNONATE DEHYDRATASE"/>
    <property type="match status" value="1"/>
</dbReference>
<dbReference type="PANTHER" id="PTHR30387:SF2">
    <property type="entry name" value="MANNONATE DEHYDRATASE"/>
    <property type="match status" value="1"/>
</dbReference>
<dbReference type="Pfam" id="PF03786">
    <property type="entry name" value="UxuA"/>
    <property type="match status" value="1"/>
</dbReference>
<dbReference type="PIRSF" id="PIRSF016049">
    <property type="entry name" value="Man_dehyd"/>
    <property type="match status" value="1"/>
</dbReference>
<dbReference type="SUPFAM" id="SSF51658">
    <property type="entry name" value="Xylose isomerase-like"/>
    <property type="match status" value="1"/>
</dbReference>
<reference key="1">
    <citation type="submission" date="2008-04" db="EMBL/GenBank/DDBJ databases">
        <title>Complete sequence of Yersinia pseudotuberculosis PB1/+.</title>
        <authorList>
            <person name="Copeland A."/>
            <person name="Lucas S."/>
            <person name="Lapidus A."/>
            <person name="Glavina del Rio T."/>
            <person name="Dalin E."/>
            <person name="Tice H."/>
            <person name="Bruce D."/>
            <person name="Goodwin L."/>
            <person name="Pitluck S."/>
            <person name="Munk A.C."/>
            <person name="Brettin T."/>
            <person name="Detter J.C."/>
            <person name="Han C."/>
            <person name="Tapia R."/>
            <person name="Schmutz J."/>
            <person name="Larimer F."/>
            <person name="Land M."/>
            <person name="Hauser L."/>
            <person name="Challacombe J.F."/>
            <person name="Green L."/>
            <person name="Lindler L.E."/>
            <person name="Nikolich M.P."/>
            <person name="Richardson P."/>
        </authorList>
    </citation>
    <scope>NUCLEOTIDE SEQUENCE [LARGE SCALE GENOMIC DNA]</scope>
    <source>
        <strain>PB1/+</strain>
    </source>
</reference>
<gene>
    <name evidence="1" type="primary">uxuA</name>
    <name type="ordered locus">YPTS_1407</name>
</gene>
<keyword id="KW-0408">Iron</keyword>
<keyword id="KW-0456">Lyase</keyword>
<keyword id="KW-0464">Manganese</keyword>
<sequence length="397" mass="44876">MEQTWRWYGPNDPVSLDDIRQAGATGVVTALHHIPNGVVWPVSEIKQRQAELAAKNLVWSVVESVPIHEDIKTHSGNYQQYIENYQQTLRNIAECGIDTVCYNFMPILDWTRTDLEYELPDGSKALRFDQIAFAAFELHILKRPGASNDYTAEEQVQAEAYFNAMTEADIAKLTGNIIAGLPGAEEGYTLDQFRARLAEYDGIDKAQLRENMAYFLRAIIPVAEQVGLRMAVHPDDPPRPILGLPRIVSTIEDMQWLKETVDSIHNGFTMCTGSYGVRADNDLVKMIETFGDRIHFTHLRSTCREGNPKTFHEGGHLQGDVDMYSVVKAILTEEQRRQSLGDMRPIPMRPDHGHQMLDDLHKKTNPGYSAIGRLKGLAEVRGVELALKRTFFPDLKQ</sequence>
<name>UXUA_YERPB</name>